<evidence type="ECO:0000255" key="1">
    <source>
        <dbReference type="HAMAP-Rule" id="MF_01569"/>
    </source>
</evidence>
<sequence>MRTSQYLLATQKETPADAVVISHQLMLRAGMIRKLASGLYTWLPMGLRVMRKVEAVVREEMNAAGALEVLMPSIQPAELWQESGRWEQYGPELLRLKDRHQRDFCVGPTHEEVITDLARNELSSYKQLPLNMYQIQTKFRDEIRPRFGLMRGREFIMKDAYSFHADQASLQETYDRMHQAYSNIFTRLGLDFRPVQADTGSIGGSYSHEFHVLAESGEDDVIFSDSSDYAANIEKAEAIPRETARLAPTEELRLVDTPDAKTIAQLVENYGLPIEKTVKTLIVRGAEEGKLVALIVRGDHELNEIKAAKLEQVADPLVMATDAELREAIGAGAGSLGPLNLPLECIIDRSVALMSDFGIGANIDDKHYFGVNWERDLPVPQVADLRNVVEGDPSPDGQGTLVIKRGIEVGHIFQLGTKYSEALKCQVLGENGKPVVLSMGCYGIGVSRVVAAAIEQSYDDKGIIWNDALAPFQIALVPLRYETDVVREATDKLYAELTAAGFEVLLDDRDKKTSPGIKFADMELIGIPHRIVVSDRGLADGNLEYKHRTEQDAQALPLNEVLTFLQARVRR</sequence>
<proteinExistence type="inferred from homology"/>
<organism>
    <name type="scientific">Pseudomonas putida (strain W619)</name>
    <dbReference type="NCBI Taxonomy" id="390235"/>
    <lineage>
        <taxon>Bacteria</taxon>
        <taxon>Pseudomonadati</taxon>
        <taxon>Pseudomonadota</taxon>
        <taxon>Gammaproteobacteria</taxon>
        <taxon>Pseudomonadales</taxon>
        <taxon>Pseudomonadaceae</taxon>
        <taxon>Pseudomonas</taxon>
    </lineage>
</organism>
<feature type="chain" id="PRO_1000199412" description="Proline--tRNA ligase">
    <location>
        <begin position="1"/>
        <end position="571"/>
    </location>
</feature>
<gene>
    <name evidence="1" type="primary">proS</name>
    <name type="ordered locus">PputW619_4010</name>
</gene>
<reference key="1">
    <citation type="submission" date="2008-02" db="EMBL/GenBank/DDBJ databases">
        <title>Complete sequence of Pseudomonas putida W619.</title>
        <authorList>
            <person name="Copeland A."/>
            <person name="Lucas S."/>
            <person name="Lapidus A."/>
            <person name="Barry K."/>
            <person name="Detter J.C."/>
            <person name="Glavina del Rio T."/>
            <person name="Dalin E."/>
            <person name="Tice H."/>
            <person name="Pitluck S."/>
            <person name="Chain P."/>
            <person name="Malfatti S."/>
            <person name="Shin M."/>
            <person name="Vergez L."/>
            <person name="Schmutz J."/>
            <person name="Larimer F."/>
            <person name="Land M."/>
            <person name="Hauser L."/>
            <person name="Kyrpides N."/>
            <person name="Kim E."/>
            <person name="Taghavi S."/>
            <person name="Vangronsveld D."/>
            <person name="van der Lelie D."/>
            <person name="Richardson P."/>
        </authorList>
    </citation>
    <scope>NUCLEOTIDE SEQUENCE [LARGE SCALE GENOMIC DNA]</scope>
    <source>
        <strain>W619</strain>
    </source>
</reference>
<name>SYP_PSEPW</name>
<dbReference type="EC" id="6.1.1.15" evidence="1"/>
<dbReference type="EMBL" id="CP000949">
    <property type="protein sequence ID" value="ACA74490.1"/>
    <property type="molecule type" value="Genomic_DNA"/>
</dbReference>
<dbReference type="SMR" id="B1JD82"/>
<dbReference type="STRING" id="390235.PputW619_4010"/>
<dbReference type="KEGG" id="ppw:PputW619_4010"/>
<dbReference type="eggNOG" id="COG0442">
    <property type="taxonomic scope" value="Bacteria"/>
</dbReference>
<dbReference type="HOGENOM" id="CLU_016739_0_0_6"/>
<dbReference type="OrthoDB" id="9809052at2"/>
<dbReference type="GO" id="GO:0005829">
    <property type="term" value="C:cytosol"/>
    <property type="evidence" value="ECO:0007669"/>
    <property type="project" value="TreeGrafter"/>
</dbReference>
<dbReference type="GO" id="GO:0002161">
    <property type="term" value="F:aminoacyl-tRNA deacylase activity"/>
    <property type="evidence" value="ECO:0007669"/>
    <property type="project" value="InterPro"/>
</dbReference>
<dbReference type="GO" id="GO:0005524">
    <property type="term" value="F:ATP binding"/>
    <property type="evidence" value="ECO:0007669"/>
    <property type="project" value="UniProtKB-UniRule"/>
</dbReference>
<dbReference type="GO" id="GO:0004827">
    <property type="term" value="F:proline-tRNA ligase activity"/>
    <property type="evidence" value="ECO:0007669"/>
    <property type="project" value="UniProtKB-UniRule"/>
</dbReference>
<dbReference type="GO" id="GO:0006433">
    <property type="term" value="P:prolyl-tRNA aminoacylation"/>
    <property type="evidence" value="ECO:0007669"/>
    <property type="project" value="UniProtKB-UniRule"/>
</dbReference>
<dbReference type="CDD" id="cd04334">
    <property type="entry name" value="ProRS-INS"/>
    <property type="match status" value="1"/>
</dbReference>
<dbReference type="CDD" id="cd00861">
    <property type="entry name" value="ProRS_anticodon_short"/>
    <property type="match status" value="1"/>
</dbReference>
<dbReference type="CDD" id="cd00779">
    <property type="entry name" value="ProRS_core_prok"/>
    <property type="match status" value="1"/>
</dbReference>
<dbReference type="FunFam" id="3.30.930.10:FF:000043">
    <property type="entry name" value="Proline--tRNA ligase"/>
    <property type="match status" value="1"/>
</dbReference>
<dbReference type="FunFam" id="3.30.930.10:FF:000097">
    <property type="entry name" value="Proline--tRNA ligase"/>
    <property type="match status" value="1"/>
</dbReference>
<dbReference type="Gene3D" id="3.40.50.800">
    <property type="entry name" value="Anticodon-binding domain"/>
    <property type="match status" value="1"/>
</dbReference>
<dbReference type="Gene3D" id="3.30.930.10">
    <property type="entry name" value="Bira Bifunctional Protein, Domain 2"/>
    <property type="match status" value="2"/>
</dbReference>
<dbReference type="HAMAP" id="MF_01569">
    <property type="entry name" value="Pro_tRNA_synth_type1"/>
    <property type="match status" value="1"/>
</dbReference>
<dbReference type="InterPro" id="IPR002314">
    <property type="entry name" value="aa-tRNA-synt_IIb"/>
</dbReference>
<dbReference type="InterPro" id="IPR006195">
    <property type="entry name" value="aa-tRNA-synth_II"/>
</dbReference>
<dbReference type="InterPro" id="IPR045864">
    <property type="entry name" value="aa-tRNA-synth_II/BPL/LPL"/>
</dbReference>
<dbReference type="InterPro" id="IPR004154">
    <property type="entry name" value="Anticodon-bd"/>
</dbReference>
<dbReference type="InterPro" id="IPR036621">
    <property type="entry name" value="Anticodon-bd_dom_sf"/>
</dbReference>
<dbReference type="InterPro" id="IPR002316">
    <property type="entry name" value="Pro-tRNA-ligase_IIa"/>
</dbReference>
<dbReference type="InterPro" id="IPR004500">
    <property type="entry name" value="Pro-tRNA-synth_IIa_bac-type"/>
</dbReference>
<dbReference type="InterPro" id="IPR023717">
    <property type="entry name" value="Pro-tRNA-Synthase_IIa_type1"/>
</dbReference>
<dbReference type="InterPro" id="IPR050062">
    <property type="entry name" value="Pro-tRNA_synthetase"/>
</dbReference>
<dbReference type="InterPro" id="IPR044140">
    <property type="entry name" value="ProRS_anticodon_short"/>
</dbReference>
<dbReference type="InterPro" id="IPR033730">
    <property type="entry name" value="ProRS_core_prok"/>
</dbReference>
<dbReference type="InterPro" id="IPR036754">
    <property type="entry name" value="YbaK/aa-tRNA-synt-asso_dom_sf"/>
</dbReference>
<dbReference type="InterPro" id="IPR007214">
    <property type="entry name" value="YbaK/aa-tRNA-synth-assoc-dom"/>
</dbReference>
<dbReference type="NCBIfam" id="NF006625">
    <property type="entry name" value="PRK09194.1"/>
    <property type="match status" value="1"/>
</dbReference>
<dbReference type="NCBIfam" id="TIGR00409">
    <property type="entry name" value="proS_fam_II"/>
    <property type="match status" value="1"/>
</dbReference>
<dbReference type="PANTHER" id="PTHR42753">
    <property type="entry name" value="MITOCHONDRIAL RIBOSOME PROTEIN L39/PROLYL-TRNA LIGASE FAMILY MEMBER"/>
    <property type="match status" value="1"/>
</dbReference>
<dbReference type="PANTHER" id="PTHR42753:SF2">
    <property type="entry name" value="PROLINE--TRNA LIGASE"/>
    <property type="match status" value="1"/>
</dbReference>
<dbReference type="Pfam" id="PF03129">
    <property type="entry name" value="HGTP_anticodon"/>
    <property type="match status" value="1"/>
</dbReference>
<dbReference type="Pfam" id="PF00587">
    <property type="entry name" value="tRNA-synt_2b"/>
    <property type="match status" value="1"/>
</dbReference>
<dbReference type="Pfam" id="PF04073">
    <property type="entry name" value="tRNA_edit"/>
    <property type="match status" value="1"/>
</dbReference>
<dbReference type="PIRSF" id="PIRSF001535">
    <property type="entry name" value="ProRS_1"/>
    <property type="match status" value="1"/>
</dbReference>
<dbReference type="PRINTS" id="PR01046">
    <property type="entry name" value="TRNASYNTHPRO"/>
</dbReference>
<dbReference type="SUPFAM" id="SSF52954">
    <property type="entry name" value="Class II aaRS ABD-related"/>
    <property type="match status" value="1"/>
</dbReference>
<dbReference type="SUPFAM" id="SSF55681">
    <property type="entry name" value="Class II aaRS and biotin synthetases"/>
    <property type="match status" value="1"/>
</dbReference>
<dbReference type="SUPFAM" id="SSF55826">
    <property type="entry name" value="YbaK/ProRS associated domain"/>
    <property type="match status" value="1"/>
</dbReference>
<dbReference type="PROSITE" id="PS50862">
    <property type="entry name" value="AA_TRNA_LIGASE_II"/>
    <property type="match status" value="1"/>
</dbReference>
<keyword id="KW-0030">Aminoacyl-tRNA synthetase</keyword>
<keyword id="KW-0067">ATP-binding</keyword>
<keyword id="KW-0963">Cytoplasm</keyword>
<keyword id="KW-0436">Ligase</keyword>
<keyword id="KW-0547">Nucleotide-binding</keyword>
<keyword id="KW-0648">Protein biosynthesis</keyword>
<accession>B1JD82</accession>
<protein>
    <recommendedName>
        <fullName evidence="1">Proline--tRNA ligase</fullName>
        <ecNumber evidence="1">6.1.1.15</ecNumber>
    </recommendedName>
    <alternativeName>
        <fullName evidence="1">Prolyl-tRNA synthetase</fullName>
        <shortName evidence="1">ProRS</shortName>
    </alternativeName>
</protein>
<comment type="function">
    <text evidence="1">Catalyzes the attachment of proline to tRNA(Pro) in a two-step reaction: proline is first activated by ATP to form Pro-AMP and then transferred to the acceptor end of tRNA(Pro). As ProRS can inadvertently accommodate and process non-cognate amino acids such as alanine and cysteine, to avoid such errors it has two additional distinct editing activities against alanine. One activity is designated as 'pretransfer' editing and involves the tRNA(Pro)-independent hydrolysis of activated Ala-AMP. The other activity is designated 'posttransfer' editing and involves deacylation of mischarged Ala-tRNA(Pro). The misacylated Cys-tRNA(Pro) is not edited by ProRS.</text>
</comment>
<comment type="catalytic activity">
    <reaction evidence="1">
        <text>tRNA(Pro) + L-proline + ATP = L-prolyl-tRNA(Pro) + AMP + diphosphate</text>
        <dbReference type="Rhea" id="RHEA:14305"/>
        <dbReference type="Rhea" id="RHEA-COMP:9700"/>
        <dbReference type="Rhea" id="RHEA-COMP:9702"/>
        <dbReference type="ChEBI" id="CHEBI:30616"/>
        <dbReference type="ChEBI" id="CHEBI:33019"/>
        <dbReference type="ChEBI" id="CHEBI:60039"/>
        <dbReference type="ChEBI" id="CHEBI:78442"/>
        <dbReference type="ChEBI" id="CHEBI:78532"/>
        <dbReference type="ChEBI" id="CHEBI:456215"/>
        <dbReference type="EC" id="6.1.1.15"/>
    </reaction>
</comment>
<comment type="subunit">
    <text evidence="1">Homodimer.</text>
</comment>
<comment type="subcellular location">
    <subcellularLocation>
        <location evidence="1">Cytoplasm</location>
    </subcellularLocation>
</comment>
<comment type="domain">
    <text evidence="1">Consists of three domains: the N-terminal catalytic domain, the editing domain and the C-terminal anticodon-binding domain.</text>
</comment>
<comment type="similarity">
    <text evidence="1">Belongs to the class-II aminoacyl-tRNA synthetase family. ProS type 1 subfamily.</text>
</comment>